<organism>
    <name type="scientific">Thermus thermophilus (strain ATCC 27634 / DSM 579 / HB8)</name>
    <dbReference type="NCBI Taxonomy" id="300852"/>
    <lineage>
        <taxon>Bacteria</taxon>
        <taxon>Thermotogati</taxon>
        <taxon>Deinococcota</taxon>
        <taxon>Deinococci</taxon>
        <taxon>Thermales</taxon>
        <taxon>Thermaceae</taxon>
        <taxon>Thermus</taxon>
    </lineage>
</organism>
<dbReference type="EC" id="3.6.4.-" evidence="1"/>
<dbReference type="EMBL" id="AB015236">
    <property type="protein sequence ID" value="BAA76480.2"/>
    <property type="molecule type" value="Genomic_DNA"/>
</dbReference>
<dbReference type="EMBL" id="AP008226">
    <property type="protein sequence ID" value="BAD70229.1"/>
    <property type="molecule type" value="Genomic_DNA"/>
</dbReference>
<dbReference type="RefSeq" id="WP_011227913.1">
    <property type="nucleotide sequence ID" value="NC_006461.1"/>
</dbReference>
<dbReference type="RefSeq" id="YP_143672.1">
    <property type="nucleotide sequence ID" value="NC_006461.1"/>
</dbReference>
<dbReference type="PDB" id="1HQC">
    <property type="method" value="X-ray"/>
    <property type="resolution" value="3.20 A"/>
    <property type="chains" value="A/B=1-324"/>
</dbReference>
<dbReference type="PDB" id="1IXR">
    <property type="method" value="X-ray"/>
    <property type="resolution" value="3.30 A"/>
    <property type="chains" value="C=1-312"/>
</dbReference>
<dbReference type="PDB" id="1IXS">
    <property type="method" value="X-ray"/>
    <property type="resolution" value="3.20 A"/>
    <property type="chains" value="B=1-318"/>
</dbReference>
<dbReference type="PDB" id="8EFV">
    <property type="method" value="EM"/>
    <property type="resolution" value="2.97 A"/>
    <property type="chains" value="A/B/C/D/E/F=1-324"/>
</dbReference>
<dbReference type="PDB" id="8EFY">
    <property type="method" value="EM"/>
    <property type="resolution" value="3.16 A"/>
    <property type="chains" value="A/B/C/D/E/F/I/J/K/L/M/N=1-324"/>
</dbReference>
<dbReference type="PDBsum" id="1HQC"/>
<dbReference type="PDBsum" id="1IXR"/>
<dbReference type="PDBsum" id="1IXS"/>
<dbReference type="PDBsum" id="8EFV"/>
<dbReference type="PDBsum" id="8EFY"/>
<dbReference type="EMDB" id="EMD-28101"/>
<dbReference type="EMDB" id="EMD-28107"/>
<dbReference type="SMR" id="Q5SL87"/>
<dbReference type="IntAct" id="Q5SL87">
    <property type="interactions" value="1"/>
</dbReference>
<dbReference type="DrugBank" id="DB00173">
    <property type="generic name" value="Adenine"/>
</dbReference>
<dbReference type="EnsemblBacteria" id="BAD70229">
    <property type="protein sequence ID" value="BAD70229"/>
    <property type="gene ID" value="BAD70229"/>
</dbReference>
<dbReference type="GeneID" id="3168960"/>
<dbReference type="KEGG" id="ttj:TTHA0406"/>
<dbReference type="PATRIC" id="fig|300852.9.peg.406"/>
<dbReference type="eggNOG" id="COG2255">
    <property type="taxonomic scope" value="Bacteria"/>
</dbReference>
<dbReference type="HOGENOM" id="CLU_055599_1_0_0"/>
<dbReference type="PhylomeDB" id="Q5SL87"/>
<dbReference type="EvolutionaryTrace" id="Q5SL87"/>
<dbReference type="Proteomes" id="UP000000532">
    <property type="component" value="Chromosome"/>
</dbReference>
<dbReference type="GO" id="GO:0005737">
    <property type="term" value="C:cytoplasm"/>
    <property type="evidence" value="ECO:0007669"/>
    <property type="project" value="UniProtKB-SubCell"/>
</dbReference>
<dbReference type="GO" id="GO:0048476">
    <property type="term" value="C:Holliday junction resolvase complex"/>
    <property type="evidence" value="ECO:0007669"/>
    <property type="project" value="UniProtKB-UniRule"/>
</dbReference>
<dbReference type="GO" id="GO:0005524">
    <property type="term" value="F:ATP binding"/>
    <property type="evidence" value="ECO:0007669"/>
    <property type="project" value="UniProtKB-UniRule"/>
</dbReference>
<dbReference type="GO" id="GO:0016887">
    <property type="term" value="F:ATP hydrolysis activity"/>
    <property type="evidence" value="ECO:0007669"/>
    <property type="project" value="InterPro"/>
</dbReference>
<dbReference type="GO" id="GO:0000400">
    <property type="term" value="F:four-way junction DNA binding"/>
    <property type="evidence" value="ECO:0007669"/>
    <property type="project" value="UniProtKB-UniRule"/>
</dbReference>
<dbReference type="GO" id="GO:0009378">
    <property type="term" value="F:four-way junction helicase activity"/>
    <property type="evidence" value="ECO:0007669"/>
    <property type="project" value="InterPro"/>
</dbReference>
<dbReference type="GO" id="GO:0006310">
    <property type="term" value="P:DNA recombination"/>
    <property type="evidence" value="ECO:0007669"/>
    <property type="project" value="UniProtKB-UniRule"/>
</dbReference>
<dbReference type="GO" id="GO:0006281">
    <property type="term" value="P:DNA repair"/>
    <property type="evidence" value="ECO:0007669"/>
    <property type="project" value="UniProtKB-UniRule"/>
</dbReference>
<dbReference type="CDD" id="cd00009">
    <property type="entry name" value="AAA"/>
    <property type="match status" value="1"/>
</dbReference>
<dbReference type="Gene3D" id="1.10.8.60">
    <property type="match status" value="1"/>
</dbReference>
<dbReference type="Gene3D" id="3.40.50.300">
    <property type="entry name" value="P-loop containing nucleotide triphosphate hydrolases"/>
    <property type="match status" value="1"/>
</dbReference>
<dbReference type="Gene3D" id="1.10.10.10">
    <property type="entry name" value="Winged helix-like DNA-binding domain superfamily/Winged helix DNA-binding domain"/>
    <property type="match status" value="1"/>
</dbReference>
<dbReference type="HAMAP" id="MF_00016">
    <property type="entry name" value="DNA_HJ_migration_RuvB"/>
    <property type="match status" value="1"/>
</dbReference>
<dbReference type="InterPro" id="IPR003593">
    <property type="entry name" value="AAA+_ATPase"/>
</dbReference>
<dbReference type="InterPro" id="IPR041445">
    <property type="entry name" value="AAA_lid_4"/>
</dbReference>
<dbReference type="InterPro" id="IPR004605">
    <property type="entry name" value="DNA_helicase_Holl-junc_RuvB"/>
</dbReference>
<dbReference type="InterPro" id="IPR027417">
    <property type="entry name" value="P-loop_NTPase"/>
</dbReference>
<dbReference type="InterPro" id="IPR008824">
    <property type="entry name" value="RuvB-like_N"/>
</dbReference>
<dbReference type="InterPro" id="IPR008823">
    <property type="entry name" value="RuvB_C"/>
</dbReference>
<dbReference type="InterPro" id="IPR036388">
    <property type="entry name" value="WH-like_DNA-bd_sf"/>
</dbReference>
<dbReference type="InterPro" id="IPR036390">
    <property type="entry name" value="WH_DNA-bd_sf"/>
</dbReference>
<dbReference type="NCBIfam" id="NF000868">
    <property type="entry name" value="PRK00080.1"/>
    <property type="match status" value="1"/>
</dbReference>
<dbReference type="NCBIfam" id="TIGR00635">
    <property type="entry name" value="ruvB"/>
    <property type="match status" value="1"/>
</dbReference>
<dbReference type="PANTHER" id="PTHR42848">
    <property type="match status" value="1"/>
</dbReference>
<dbReference type="PANTHER" id="PTHR42848:SF1">
    <property type="entry name" value="HOLLIDAY JUNCTION BRANCH MIGRATION COMPLEX SUBUNIT RUVB"/>
    <property type="match status" value="1"/>
</dbReference>
<dbReference type="Pfam" id="PF17864">
    <property type="entry name" value="AAA_lid_4"/>
    <property type="match status" value="1"/>
</dbReference>
<dbReference type="Pfam" id="PF05491">
    <property type="entry name" value="RuvB_C"/>
    <property type="match status" value="1"/>
</dbReference>
<dbReference type="Pfam" id="PF05496">
    <property type="entry name" value="RuvB_N"/>
    <property type="match status" value="1"/>
</dbReference>
<dbReference type="SMART" id="SM00382">
    <property type="entry name" value="AAA"/>
    <property type="match status" value="1"/>
</dbReference>
<dbReference type="SUPFAM" id="SSF52540">
    <property type="entry name" value="P-loop containing nucleoside triphosphate hydrolases"/>
    <property type="match status" value="1"/>
</dbReference>
<dbReference type="SUPFAM" id="SSF46785">
    <property type="entry name" value="Winged helix' DNA-binding domain"/>
    <property type="match status" value="1"/>
</dbReference>
<reference evidence="14" key="1">
    <citation type="journal article" date="1999" name="Mol. Gen. Genet.">
        <title>Novel properties of the Thermus thermophilus RuvB protein, which promotes branch migration of Holliday junctions.</title>
        <authorList>
            <person name="Yamada K."/>
            <person name="Fukuoh A."/>
            <person name="Iwasaki H."/>
            <person name="Shinagawa H."/>
        </authorList>
    </citation>
    <scope>NUCLEOTIDE SEQUENCE [GENOMIC DNA]</scope>
    <scope>FUNCTION</scope>
    <scope>CATALYTIC ACTIVITY</scope>
    <scope>COFACTOR</scope>
    <scope>ACTIVITY REGULATION</scope>
    <scope>BIOPHYSICOCHEMICAL PROPERTIES</scope>
    <scope>SUBUNIT</scope>
    <scope>DNA-BINDING</scope>
    <source>
        <strain>ATCC 27634 / DSM 579 / HB8</strain>
    </source>
</reference>
<reference evidence="15" key="2">
    <citation type="submission" date="2004-11" db="EMBL/GenBank/DDBJ databases">
        <title>Complete genome sequence of Thermus thermophilus HB8.</title>
        <authorList>
            <person name="Masui R."/>
            <person name="Kurokawa K."/>
            <person name="Nakagawa N."/>
            <person name="Tokunaga F."/>
            <person name="Koyama Y."/>
            <person name="Shibata T."/>
            <person name="Oshima T."/>
            <person name="Yokoyama S."/>
            <person name="Yasunaga T."/>
            <person name="Kuramitsu S."/>
        </authorList>
    </citation>
    <scope>NUCLEOTIDE SEQUENCE [LARGE SCALE GENOMIC DNA]</scope>
    <source>
        <strain>ATCC 27634 / DSM 579 / HB8</strain>
    </source>
</reference>
<reference key="3">
    <citation type="journal article" date="2000" name="Genes Genet. Syst.">
        <title>Identification and characterization of Thermus thermophilus HB8 RuvA protein, the subunit of the RuvAB protein complex that promotes branch migration of Holliday junctions.</title>
        <authorList>
            <person name="Ohnishi T."/>
            <person name="Iwasaki H."/>
            <person name="Ishino Y."/>
            <person name="Kuramitsu S."/>
            <person name="Nakata A."/>
            <person name="Shinagawa H."/>
        </authorList>
    </citation>
    <scope>FUNCTION</scope>
    <scope>SUBUNIT</scope>
    <source>
        <strain>ATCC 27634 / DSM 579 / HB8</strain>
    </source>
</reference>
<reference key="4">
    <citation type="journal article" date="2008" name="Biochem. Biophys. Res. Commun.">
        <title>Electron microscopic single particle analysis of a tetrameric RuvA/RuvB/Holliday junction DNA complex.</title>
        <authorList>
            <person name="Mayanagi K."/>
            <person name="Fujiwara Y."/>
            <person name="Miyata T."/>
            <person name="Morikawa K."/>
        </authorList>
    </citation>
    <scope>SUBUNIT</scope>
</reference>
<reference key="5">
    <citation type="journal article" date="2008" name="Biochem. Biophys. Res. Commun.">
        <title>Functional significance of octameric RuvA for a branch migration complex from Thermus thermophilus.</title>
        <authorList>
            <person name="Fujiwara Y."/>
            <person name="Mayanagi K."/>
            <person name="Morikawa K."/>
        </authorList>
    </citation>
    <scope>FUNCTION</scope>
    <scope>SUBUNIT</scope>
</reference>
<reference evidence="19" key="6">
    <citation type="journal article" date="2001" name="Proc. Natl. Acad. Sci. U.S.A.">
        <title>Crystal structure of the Holliday junction migration motor protein RuvB from Thermus thermophilus HB8.</title>
        <authorList>
            <person name="Yamada K."/>
            <person name="Kunishima N."/>
            <person name="Mayanagi K."/>
            <person name="Ohnishi T."/>
            <person name="Nishino T."/>
            <person name="Iwasaki H."/>
            <person name="Shinagawa H."/>
            <person name="Morikawa K."/>
        </authorList>
    </citation>
    <scope>X-RAY CRYSTALLOGRAPHY (3.2 ANGSTROMS) IN COMPLEX WITH ATP ANALOG</scope>
    <scope>DOMAIN</scope>
    <source>
        <strain>ATCC 27634 / DSM 579 / HB8</strain>
    </source>
</reference>
<reference evidence="20 21" key="7">
    <citation type="journal article" date="2002" name="Mol. Cell">
        <title>Crystal structure of the RuvA-RuvB complex: a structural basis for the Holliday junction migrating motor machinery.</title>
        <authorList>
            <person name="Yamada K."/>
            <person name="Miyata T."/>
            <person name="Tsuchiya D."/>
            <person name="Oyama T."/>
            <person name="Fujiwara Y."/>
            <person name="Ohnishi T."/>
            <person name="Iwasaki H."/>
            <person name="Shinagawa H."/>
            <person name="Ariyoshi M."/>
            <person name="Mayanagi K."/>
            <person name="Morikawa K."/>
        </authorList>
    </citation>
    <scope>X-RAY CRYSTALLOGRAPHY (3.20 ANGSTROMS) OF 1-312 IN COMPLEX WITH RUVA AND ATP ANALOG</scope>
    <scope>X-RAY CRYSTALLOGRAPHY (3.20 ANGSTROMS) OF 1-318 IN COMPLEX WITH RUVA DOMAIN III AND ATP ANALOG</scope>
    <scope>SUBUNIT</scope>
    <scope>MUTAGENESIS OF TYR-309</scope>
    <source>
        <strain>ATCC 27634 / DSM 579 / HB8</strain>
    </source>
</reference>
<feature type="chain" id="PRO_0000165619" description="Holliday junction branch migration complex subunit RuvB">
    <location>
        <begin position="1"/>
        <end position="324"/>
    </location>
</feature>
<feature type="region of interest" description="Large ATPase domain (RuvB-L)" evidence="1 3">
    <location>
        <begin position="1"/>
        <end position="168"/>
    </location>
</feature>
<feature type="region of interest" description="Small ATPAse domain (RuvB-S)" evidence="1 3">
    <location>
        <begin position="169"/>
        <end position="239"/>
    </location>
</feature>
<feature type="region of interest" description="Head domain (RuvB-H)" evidence="1 3">
    <location>
        <begin position="242"/>
        <end position="324"/>
    </location>
</feature>
<feature type="binding site" evidence="3 5 16 18">
    <location>
        <position position="14"/>
    </location>
    <ligand>
        <name>ATP</name>
        <dbReference type="ChEBI" id="CHEBI:30616"/>
    </ligand>
</feature>
<feature type="binding site" evidence="3 16 18">
    <location>
        <position position="15"/>
    </location>
    <ligand>
        <name>ATP</name>
        <dbReference type="ChEBI" id="CHEBI:30616"/>
    </ligand>
</feature>
<feature type="binding site" evidence="1 5 17">
    <location>
        <position position="48"/>
    </location>
    <ligand>
        <name>ATP</name>
        <dbReference type="ChEBI" id="CHEBI:30616"/>
    </ligand>
</feature>
<feature type="binding site" evidence="1 5 17 18">
    <location>
        <position position="51"/>
    </location>
    <ligand>
        <name>ATP</name>
        <dbReference type="ChEBI" id="CHEBI:30616"/>
    </ligand>
</feature>
<feature type="binding site" evidence="1 5 17 18">
    <location>
        <position position="52"/>
    </location>
    <ligand>
        <name>ATP</name>
        <dbReference type="ChEBI" id="CHEBI:30616"/>
    </ligand>
</feature>
<feature type="binding site" evidence="1">
    <location>
        <position position="52"/>
    </location>
    <ligand>
        <name>Mg(2+)</name>
        <dbReference type="ChEBI" id="CHEBI:18420"/>
    </ligand>
</feature>
<feature type="binding site" evidence="1 5 17 18">
    <location>
        <position position="53"/>
    </location>
    <ligand>
        <name>ATP</name>
        <dbReference type="ChEBI" id="CHEBI:30616"/>
    </ligand>
</feature>
<feature type="binding site" evidence="12">
    <location>
        <position position="97"/>
    </location>
    <ligand>
        <name>ATP</name>
        <dbReference type="ChEBI" id="CHEBI:30616"/>
    </ligand>
</feature>
<feature type="binding site" evidence="12">
    <location>
        <position position="146"/>
    </location>
    <ligand>
        <name>ATP</name>
        <dbReference type="ChEBI" id="CHEBI:30616"/>
    </ligand>
</feature>
<feature type="binding site" evidence="1 3 5 16 18">
    <location>
        <position position="168"/>
    </location>
    <ligand>
        <name>ATP</name>
        <dbReference type="ChEBI" id="CHEBI:30616"/>
    </ligand>
</feature>
<feature type="binding site" evidence="1 12">
    <location>
        <position position="205"/>
    </location>
    <ligand>
        <name>ATP</name>
        <dbReference type="ChEBI" id="CHEBI:30616"/>
    </ligand>
</feature>
<feature type="binding site" evidence="1">
    <location>
        <position position="297"/>
    </location>
    <ligand>
        <name>DNA</name>
        <dbReference type="ChEBI" id="CHEBI:16991"/>
    </ligand>
</feature>
<feature type="binding site" evidence="1">
    <location>
        <position position="302"/>
    </location>
    <ligand>
        <name>DNA</name>
        <dbReference type="ChEBI" id="CHEBI:16991"/>
    </ligand>
</feature>
<feature type="mutagenesis site" description="Suitable for crystallization." evidence="5">
    <original>Y</original>
    <variation>R</variation>
    <location>
        <position position="309"/>
    </location>
</feature>
<feature type="turn" evidence="24">
    <location>
        <begin position="11"/>
        <end position="13"/>
    </location>
</feature>
<feature type="helix" evidence="24">
    <location>
        <begin position="18"/>
        <end position="33"/>
    </location>
</feature>
<feature type="strand" evidence="23">
    <location>
        <begin position="34"/>
        <end position="36"/>
    </location>
</feature>
<feature type="strand" evidence="24">
    <location>
        <begin position="41"/>
        <end position="44"/>
    </location>
</feature>
<feature type="helix" evidence="24">
    <location>
        <begin position="51"/>
        <end position="62"/>
    </location>
</feature>
<feature type="strand" evidence="24">
    <location>
        <begin position="66"/>
        <end position="72"/>
    </location>
</feature>
<feature type="helix" evidence="24">
    <location>
        <begin position="79"/>
        <end position="86"/>
    </location>
</feature>
<feature type="strand" evidence="24">
    <location>
        <begin position="92"/>
        <end position="98"/>
    </location>
</feature>
<feature type="helix" evidence="24">
    <location>
        <begin position="99"/>
        <end position="101"/>
    </location>
</feature>
<feature type="helix" evidence="24">
    <location>
        <begin position="104"/>
        <end position="107"/>
    </location>
</feature>
<feature type="turn" evidence="24">
    <location>
        <begin position="108"/>
        <end position="111"/>
    </location>
</feature>
<feature type="helix" evidence="24">
    <location>
        <begin position="112"/>
        <end position="115"/>
    </location>
</feature>
<feature type="strand" evidence="24">
    <location>
        <begin position="120"/>
        <end position="123"/>
    </location>
</feature>
<feature type="helix" evidence="24">
    <location>
        <begin position="126"/>
        <end position="128"/>
    </location>
</feature>
<feature type="strand" evidence="24">
    <location>
        <begin position="130"/>
        <end position="132"/>
    </location>
</feature>
<feature type="strand" evidence="24">
    <location>
        <begin position="139"/>
        <end position="146"/>
    </location>
</feature>
<feature type="helix" evidence="24">
    <location>
        <begin position="148"/>
        <end position="150"/>
    </location>
</feature>
<feature type="helix" evidence="24">
    <location>
        <begin position="153"/>
        <end position="157"/>
    </location>
</feature>
<feature type="strand" evidence="24">
    <location>
        <begin position="160"/>
        <end position="164"/>
    </location>
</feature>
<feature type="helix" evidence="24">
    <location>
        <begin position="170"/>
        <end position="184"/>
    </location>
</feature>
<feature type="helix" evidence="24">
    <location>
        <begin position="190"/>
        <end position="198"/>
    </location>
</feature>
<feature type="helix" evidence="24">
    <location>
        <begin position="204"/>
        <end position="221"/>
    </location>
</feature>
<feature type="strand" evidence="24">
    <location>
        <begin position="224"/>
        <end position="226"/>
    </location>
</feature>
<feature type="helix" evidence="24">
    <location>
        <begin position="228"/>
        <end position="237"/>
    </location>
</feature>
<feature type="strand" evidence="22">
    <location>
        <begin position="241"/>
        <end position="244"/>
    </location>
</feature>
<feature type="helix" evidence="24">
    <location>
        <begin position="247"/>
        <end position="258"/>
    </location>
</feature>
<feature type="turn" evidence="24">
    <location>
        <begin position="259"/>
        <end position="262"/>
    </location>
</feature>
<feature type="helix" evidence="24">
    <location>
        <begin position="267"/>
        <end position="274"/>
    </location>
</feature>
<feature type="helix" evidence="24">
    <location>
        <begin position="278"/>
        <end position="283"/>
    </location>
</feature>
<feature type="helix" evidence="24">
    <location>
        <begin position="286"/>
        <end position="289"/>
    </location>
</feature>
<feature type="turn" evidence="24">
    <location>
        <begin position="290"/>
        <end position="293"/>
    </location>
</feature>
<feature type="strand" evidence="24">
    <location>
        <begin position="296"/>
        <end position="298"/>
    </location>
</feature>
<feature type="strand" evidence="24">
    <location>
        <begin position="301"/>
        <end position="303"/>
    </location>
</feature>
<feature type="helix" evidence="24">
    <location>
        <begin position="306"/>
        <end position="311"/>
    </location>
</feature>
<protein>
    <recommendedName>
        <fullName evidence="1">Holliday junction branch migration complex subunit RuvB</fullName>
        <ecNumber evidence="1">3.6.4.-</ecNumber>
    </recommendedName>
</protein>
<name>RUVB_THET8</name>
<keyword id="KW-0002">3D-structure</keyword>
<keyword id="KW-0067">ATP-binding</keyword>
<keyword id="KW-0963">Cytoplasm</keyword>
<keyword id="KW-0227">DNA damage</keyword>
<keyword id="KW-0233">DNA recombination</keyword>
<keyword id="KW-0234">DNA repair</keyword>
<keyword id="KW-0238">DNA-binding</keyword>
<keyword id="KW-0378">Hydrolase</keyword>
<keyword id="KW-0547">Nucleotide-binding</keyword>
<keyword id="KW-1185">Reference proteome</keyword>
<comment type="function">
    <text evidence="1">The RuvA-RuvB-RuvC complex processes Holliday junction (HJ) DNA during genetic recombination and DNA repair, while the RuvA-RuvB complex plays an important role in the rescue of blocked DNA replication forks via replication fork reversal (RFR). RuvA specifically binds to HJ cruciform DNA, conferring on it an open structure. The RuvB hexamer acts as an ATP-dependent pump, pulling dsDNA into and through the RuvAB complex. RuvB forms 2 homohexamers on either side of HJ DNA bound by 1 or 2 RuvA tetramers; 4 subunits per hexamer contact DNA at a time. Coordinated motions by a converter formed by DNA-disengaged RuvB subunits stimulates ATP hydrolysis and nucleotide exchange. Immobilization of the converter enables RuvB to convert the ATP-contained energy into a lever motion, pulling 2 nucleotides of DNA out of the RuvA tetramer per ATP hydrolyzed, thus driving DNA branch migration. The RuvB motors rotate together with the DNA substrate, which together with the progressing nucleotide cycle form the mechanistic basis for DNA recombination by continuous HJ branch migration. Branch migration allows RuvC to scan DNA until it finds its consensus sequence, where it cleaves and resolves cruciform DNA.</text>
</comment>
<comment type="function">
    <text evidence="2 4 7">RuvB is a Mg(2+)-dependent, DNA-dependent ATPase with an equal preference for supercoiled and linear dsDNA; all (d)NTPs tested were efficiently hydrolyzed. Promotes Holliday junction (HJ) dissociation at 60 degrees Celsius in the presence of ATP but not ATP-gamma-S or ADP; (d)ATP, (d)CTP and dTTP also power dissociation in the absence of any RuvA (PubMed:10485292, PubMed:18068124). RuvA stimulates the ATPase of RuvB in the presence of dsDNA and HJ branch migration by RuvB (PubMed:11245216, PubMed:18068124). Excess RuvB stimulates some branch migration in vitro even in the presence of mutant RuvA (PubMed:18068124).</text>
</comment>
<comment type="catalytic activity">
    <reaction evidence="1 2">
        <text>ATP + H2O = ADP + phosphate + H(+)</text>
        <dbReference type="Rhea" id="RHEA:13065"/>
        <dbReference type="ChEBI" id="CHEBI:15377"/>
        <dbReference type="ChEBI" id="CHEBI:15378"/>
        <dbReference type="ChEBI" id="CHEBI:30616"/>
        <dbReference type="ChEBI" id="CHEBI:43474"/>
        <dbReference type="ChEBI" id="CHEBI:456216"/>
    </reaction>
</comment>
<comment type="cofactor">
    <cofactor evidence="2">
        <name>Mg(2+)</name>
        <dbReference type="ChEBI" id="CHEBI:18420"/>
    </cofactor>
</comment>
<comment type="activity regulation">
    <text evidence="9">The activity of RuvB is enhanced by E.coli RuvA.</text>
</comment>
<comment type="biophysicochemical properties">
    <temperatureDependence>
        <text evidence="2">Optimum temperature is 70 degrees Celsius, ATP, ATP-gamma-S or ADP are required for thermostability.</text>
    </temperatureDependence>
</comment>
<comment type="subunit">
    <text evidence="1 3 4 5 6 7 9 10 11 12 13">Homohexamer (Probable). Forms a complex with RuvA (Probable) (PubMed:11171970, PubMed:12408833, PubMed:17981150). Electron microscopic images suggest 2 closely interacting RuvA tetramers sandwich the HJ DNA; each tetramer associates with an RuvB hexamer (PubMed:12408833, PubMed:17981150, PubMed:18068124). Forms 2 complexes with Holliday junction (HJ) DNA which probably have 1 and 2 RuvA tetramers per complex (called complex I and complex II) (PubMed:11245216). Forms an RuvA(8)-RuvB(12)-Holliday junction (HJ) complex. HJ DNA is sandwiched between 2 RuvA tetramers; dsDNA enters through RuvA and exits via RuvB. An RuvB hexamer assembles on each DNA strand where it exits the tetramer. Each RuvB hexamer is contacted by two RuvA subunits (via domain III) on 2 adjacent RuvB subunits; this complex drives branch migration. In the full resolvosome a probable DNA-RuvA(4)-RuvB(12)-RuvC(2) complex forms which resolves the HJ.</text>
</comment>
<comment type="subcellular location">
    <subcellularLocation>
        <location evidence="1">Cytoplasm</location>
    </subcellularLocation>
</comment>
<comment type="domain">
    <text evidence="1 3 5">Has 3 domains, the large (RuvB-L, also called N) and small ATPase (RuvB-S, also called C) domains and the C-terminal head (RuvB-H, also called M) domain (PubMed:11171970). The head domain binds DNA, while the ATPase domains jointly bind ATP, ADP or are empty depending on the state of the subunit in the translocation cycle. During a single DNA translocation step the structure of each domain remains the same, but their relative positions change. Domains M and C are flexible; they change conformations whenn bound to whole RuvA and only domain III of RuvA; domain C probably binds Holliday junction DNA (PubMed:12408833).</text>
</comment>
<comment type="similarity">
    <text evidence="1">Belongs to the RuvB family.</text>
</comment>
<proteinExistence type="evidence at protein level"/>
<evidence type="ECO:0000255" key="1">
    <source>
        <dbReference type="HAMAP-Rule" id="MF_00016"/>
    </source>
</evidence>
<evidence type="ECO:0000269" key="2">
    <source>
    </source>
</evidence>
<evidence type="ECO:0000269" key="3">
    <source>
    </source>
</evidence>
<evidence type="ECO:0000269" key="4">
    <source>
    </source>
</evidence>
<evidence type="ECO:0000269" key="5">
    <source>
    </source>
</evidence>
<evidence type="ECO:0000269" key="6">
    <source>
    </source>
</evidence>
<evidence type="ECO:0000269" key="7">
    <source>
    </source>
</evidence>
<evidence type="ECO:0000303" key="8">
    <source>
    </source>
</evidence>
<evidence type="ECO:0000305" key="9">
    <source>
    </source>
</evidence>
<evidence type="ECO:0000305" key="10">
    <source>
    </source>
</evidence>
<evidence type="ECO:0000305" key="11">
    <source>
    </source>
</evidence>
<evidence type="ECO:0000305" key="12">
    <source>
    </source>
</evidence>
<evidence type="ECO:0000305" key="13">
    <source>
    </source>
</evidence>
<evidence type="ECO:0000312" key="14">
    <source>
        <dbReference type="EMBL" id="BAA76480.2"/>
    </source>
</evidence>
<evidence type="ECO:0000312" key="15">
    <source>
        <dbReference type="EMBL" id="BAD70229.1"/>
    </source>
</evidence>
<evidence type="ECO:0000312" key="16">
    <source>
        <dbReference type="PDB" id="1HQC"/>
    </source>
</evidence>
<evidence type="ECO:0000312" key="17">
    <source>
        <dbReference type="PDB" id="1IXR"/>
    </source>
</evidence>
<evidence type="ECO:0000312" key="18">
    <source>
        <dbReference type="PDB" id="1IXS"/>
    </source>
</evidence>
<evidence type="ECO:0007744" key="19">
    <source>
        <dbReference type="PDB" id="1HQC"/>
    </source>
</evidence>
<evidence type="ECO:0007744" key="20">
    <source>
        <dbReference type="PDB" id="1IXR"/>
    </source>
</evidence>
<evidence type="ECO:0007744" key="21">
    <source>
        <dbReference type="PDB" id="1IXS"/>
    </source>
</evidence>
<evidence type="ECO:0007829" key="22">
    <source>
        <dbReference type="PDB" id="1IXR"/>
    </source>
</evidence>
<evidence type="ECO:0007829" key="23">
    <source>
        <dbReference type="PDB" id="1IXS"/>
    </source>
</evidence>
<evidence type="ECO:0007829" key="24">
    <source>
        <dbReference type="PDB" id="8EFV"/>
    </source>
</evidence>
<gene>
    <name evidence="1 8" type="primary">ruvB</name>
    <name type="ordered locus">TTHA0406</name>
</gene>
<sequence>MEDLALRPKTLDEYIGQERLKQKLRVYLEAAKARKEPLEHLLLFGPPGLGKTTLAHVIAHELGVNLRVTSGPAIEKPGDLAAILANSLEEGDILFIDEIHRLSRQAEEHLYPAMEDFVMDIVIGQGPAARTIRLELPRFTLIGATTRPGLITAPLLSRFGIVEHLEYYTPEELAQGVMRDARLLGVRITEEAALEIGRRSRGTMRVAKRLFRRVRDFAQVAGEEVITRERALEALAALGLDELGLEKRDREILEVLILRFGGGPVGLATLATALSEDPGTLEEVHEPYLIRQGLLKRTPRGRVATELAYRHLGYPPPVGPLLEP</sequence>
<accession>Q5SL87</accession>